<feature type="chain" id="PRO_0000165313" description="Probable terminase, ATPase subunit">
    <location>
        <begin position="1"/>
        <end position="607"/>
    </location>
</feature>
<organism>
    <name type="scientific">Haemophilus phage HP1 (strain HP1c1)</name>
    <name type="common">Bacteriophage HP1</name>
    <dbReference type="NCBI Taxonomy" id="1289570"/>
    <lineage>
        <taxon>Viruses</taxon>
        <taxon>Duplodnaviria</taxon>
        <taxon>Heunggongvirae</taxon>
        <taxon>Uroviricota</taxon>
        <taxon>Caudoviricetes</taxon>
        <taxon>Peduoviridae</taxon>
        <taxon>Hpunavirus</taxon>
        <taxon>Haemophilus phage HP1</taxon>
    </lineage>
</organism>
<organismHost>
    <name type="scientific">Haemophilus influenzae</name>
    <dbReference type="NCBI Taxonomy" id="727"/>
</organismHost>
<accession>P51718</accession>
<keyword id="KW-0067">ATP-binding</keyword>
<keyword id="KW-0547">Nucleotide-binding</keyword>
<keyword id="KW-1185">Reference proteome</keyword>
<keyword id="KW-0231">Viral genome packaging</keyword>
<keyword id="KW-1188">Viral release from host cell</keyword>
<proteinExistence type="predicted"/>
<dbReference type="EMBL" id="U24159">
    <property type="protein sequence ID" value="AAB09201.1"/>
    <property type="molecule type" value="Genomic_DNA"/>
</dbReference>
<dbReference type="PIR" id="S69522">
    <property type="entry name" value="S69522"/>
</dbReference>
<dbReference type="RefSeq" id="NP_043485.1">
    <property type="nucleotide sequence ID" value="NC_001697.1"/>
</dbReference>
<dbReference type="GeneID" id="1261142"/>
<dbReference type="KEGG" id="vg:1261142"/>
<dbReference type="Proteomes" id="UP000001713">
    <property type="component" value="Segment"/>
</dbReference>
<dbReference type="GO" id="GO:0005524">
    <property type="term" value="F:ATP binding"/>
    <property type="evidence" value="ECO:0007669"/>
    <property type="project" value="UniProtKB-KW"/>
</dbReference>
<dbReference type="Gene3D" id="3.30.420.240">
    <property type="match status" value="1"/>
</dbReference>
<dbReference type="Gene3D" id="3.40.50.300">
    <property type="entry name" value="P-loop containing nucleotide triphosphate hydrolases"/>
    <property type="match status" value="1"/>
</dbReference>
<dbReference type="InterPro" id="IPR010332">
    <property type="entry name" value="ATPase_terminase-su_N"/>
</dbReference>
<dbReference type="InterPro" id="IPR027417">
    <property type="entry name" value="P-loop_NTPase"/>
</dbReference>
<dbReference type="InterPro" id="IPR035421">
    <property type="entry name" value="Terminase_6C"/>
</dbReference>
<dbReference type="Pfam" id="PF06056">
    <property type="entry name" value="Terminase_5"/>
    <property type="match status" value="1"/>
</dbReference>
<dbReference type="Pfam" id="PF17289">
    <property type="entry name" value="Terminase_6C"/>
    <property type="match status" value="1"/>
</dbReference>
<dbReference type="Pfam" id="PF03237">
    <property type="entry name" value="Terminase_6N"/>
    <property type="match status" value="1"/>
</dbReference>
<reference key="1">
    <citation type="journal article" date="1996" name="Nucleic Acids Res.">
        <title>The complete nucleotide sequence of bacteriophage HP1 DNA.</title>
        <authorList>
            <person name="Esposito D."/>
            <person name="Fitzmaurice W.P."/>
            <person name="Benjamin R.C."/>
            <person name="Goodman S.D."/>
            <person name="Waldman A.S."/>
            <person name="Scocca J.J."/>
        </authorList>
    </citation>
    <scope>NUCLEOTIDE SEQUENCE [LARGE SCALE GENOMIC DNA]</scope>
</reference>
<name>VPP_BPHC1</name>
<comment type="similarity">
    <text evidence="1">To phage P2 protein P.</text>
</comment>
<sequence length="607" mass="70062">MAEHKLRKRKTSRYDDEVIYAAKFLYLKKYTPKEIAEELGLNSRRPIYYWAEKYNWRNLLSESGIEELIALRIITLTERENKSDQEIKELEALIDKDIQYKKQRAATVAKVTAKSAVNSADVSGNERAFADSGDGDERKKKKRVKNDISHVTPEMCQPFIDSLFDYQKHIRSNKHHDVRNILKSRQIGATYYFSFEALEDAIFSGDNQIFLSASKRQAEIFKNYIVKMAREYFGVELTGNPIILSNGAELHFLSTNKNTSQGNSGHVYGDEYAWIRDFQRFDDVASAMATHEKWRETYFSTPSSKFHESYSFWSGDNWRDGDPKRKNVPFPTFAELRDGGRLCPDGQWRYVVTIEDALKGGADKLFNIEKLKQRYSKYAFNQLYMCIWIDDADSIFNVKQLLKCGVDIAKWKDFNPKADRPFGDREVWGGFDPAHSGDGASFVIIAPPALPGEKYRMLARYQWHGLSYVYQANQIRALYEKYNMTYIGIDATGVGYGVYELVKEFARRAATAIIYNPESKTGMVLKVHDLVEHGQIEWSESELDIVPSFLMIKHQSTKSGNTMTFTAERTVKTQHADVFFAICNAINKKSLSDKPRKRRRWSVLNEN</sequence>
<evidence type="ECO:0000305" key="1"/>
<protein>
    <recommendedName>
        <fullName>Probable terminase, ATPase subunit</fullName>
    </recommendedName>
    <alternativeName>
        <fullName>ORF16</fullName>
    </alternativeName>
</protein>